<evidence type="ECO:0000250" key="1">
    <source>
        <dbReference type="UniProtKB" id="O43174"/>
    </source>
</evidence>
<evidence type="ECO:0000250" key="2">
    <source>
        <dbReference type="UniProtKB" id="Q811W2"/>
    </source>
</evidence>
<evidence type="ECO:0000250" key="3">
    <source>
        <dbReference type="UniProtKB" id="Q9NR63"/>
    </source>
</evidence>
<evidence type="ECO:0000250" key="4">
    <source>
        <dbReference type="UniProtKB" id="Q9Y6A2"/>
    </source>
</evidence>
<evidence type="ECO:0000255" key="5"/>
<evidence type="ECO:0000305" key="6"/>
<accession>Q08D50</accession>
<accession>F6S5X5</accession>
<reference key="1">
    <citation type="journal article" date="2010" name="Science">
        <title>The genome of the Western clawed frog Xenopus tropicalis.</title>
        <authorList>
            <person name="Hellsten U."/>
            <person name="Harland R.M."/>
            <person name="Gilchrist M.J."/>
            <person name="Hendrix D."/>
            <person name="Jurka J."/>
            <person name="Kapitonov V."/>
            <person name="Ovcharenko I."/>
            <person name="Putnam N.H."/>
            <person name="Shu S."/>
            <person name="Taher L."/>
            <person name="Blitz I.L."/>
            <person name="Blumberg B."/>
            <person name="Dichmann D.S."/>
            <person name="Dubchak I."/>
            <person name="Amaya E."/>
            <person name="Detter J.C."/>
            <person name="Fletcher R."/>
            <person name="Gerhard D.S."/>
            <person name="Goodstein D."/>
            <person name="Graves T."/>
            <person name="Grigoriev I.V."/>
            <person name="Grimwood J."/>
            <person name="Kawashima T."/>
            <person name="Lindquist E."/>
            <person name="Lucas S.M."/>
            <person name="Mead P.E."/>
            <person name="Mitros T."/>
            <person name="Ogino H."/>
            <person name="Ohta Y."/>
            <person name="Poliakov A.V."/>
            <person name="Pollet N."/>
            <person name="Robert J."/>
            <person name="Salamov A."/>
            <person name="Sater A.K."/>
            <person name="Schmutz J."/>
            <person name="Terry A."/>
            <person name="Vize P.D."/>
            <person name="Warren W.C."/>
            <person name="Wells D."/>
            <person name="Wills A."/>
            <person name="Wilson R.K."/>
            <person name="Zimmerman L.B."/>
            <person name="Zorn A.M."/>
            <person name="Grainger R."/>
            <person name="Grammer T."/>
            <person name="Khokha M.K."/>
            <person name="Richardson P.M."/>
            <person name="Rokhsar D.S."/>
        </authorList>
    </citation>
    <scope>NUCLEOTIDE SEQUENCE [LARGE SCALE GENOMIC DNA]</scope>
</reference>
<reference key="2">
    <citation type="submission" date="2006-09" db="EMBL/GenBank/DDBJ databases">
        <authorList>
            <consortium name="NIH - Xenopus Gene Collection (XGC) project"/>
        </authorList>
    </citation>
    <scope>NUCLEOTIDE SEQUENCE [LARGE SCALE MRNA]</scope>
    <source>
        <tissue>Embryo</tissue>
        <tissue>Testis</tissue>
    </source>
</reference>
<comment type="function">
    <text evidence="2 3">A cytochrome P450 monooxygenase involved in the metabolism of retinoates (RAs), the active metabolites of vitamin A, and critical signaling molecules in animals (By similarity). RAs exist as at least four different isomers: all-trans-RA (atRA), 9-cis-RA, 13-cis-RA, and 9,13-dicis-RA, where atRA is considered to be the biologically active isomer, although 9-cis-RA and 13-cis-RA also have activity (By similarity). Catalyzes the hydroxylation of atRA primarily at C-4 and C-18, thereby contributing to the regulation of atRA homeostasis and signaling (By similarity). Hydroxylation of atRA limits its biological activity and initiates a degradative process leading to its eventual elimination (By similarity). Involved in the convertion of atRA to all-trans-4-oxo-RA. Can oxidize all-trans-13,14-dihydroretinoate (DRA) to metabolites which could include all-trans-4-oxo-DRA, all-trans-4-hydroxy-DRA, all-trans-5,8-epoxy-DRA, and all-trans-18-hydroxy-DRA (By similarity).</text>
</comment>
<comment type="catalytic activity">
    <reaction evidence="2">
        <text>all-trans-retinoate + reduced [NADPH--hemoprotein reductase] + O2 = all-trans-4-hydroxyretinoate + oxidized [NADPH--hemoprotein reductase] + H2O + H(+)</text>
        <dbReference type="Rhea" id="RHEA:51984"/>
        <dbReference type="Rhea" id="RHEA-COMP:11964"/>
        <dbReference type="Rhea" id="RHEA-COMP:11965"/>
        <dbReference type="ChEBI" id="CHEBI:15377"/>
        <dbReference type="ChEBI" id="CHEBI:15378"/>
        <dbReference type="ChEBI" id="CHEBI:15379"/>
        <dbReference type="ChEBI" id="CHEBI:35291"/>
        <dbReference type="ChEBI" id="CHEBI:57618"/>
        <dbReference type="ChEBI" id="CHEBI:58210"/>
        <dbReference type="ChEBI" id="CHEBI:134178"/>
    </reaction>
    <physiologicalReaction direction="left-to-right" evidence="2">
        <dbReference type="Rhea" id="RHEA:51985"/>
    </physiologicalReaction>
</comment>
<comment type="catalytic activity">
    <reaction evidence="2">
        <text>all-trans-retinoate + reduced [NADPH--hemoprotein reductase] + O2 = all-trans-18-hydroxyretinoate + oxidized [NADPH--hemoprotein reductase] + H2O + H(+)</text>
        <dbReference type="Rhea" id="RHEA:55856"/>
        <dbReference type="Rhea" id="RHEA-COMP:11964"/>
        <dbReference type="Rhea" id="RHEA-COMP:11965"/>
        <dbReference type="ChEBI" id="CHEBI:15377"/>
        <dbReference type="ChEBI" id="CHEBI:15378"/>
        <dbReference type="ChEBI" id="CHEBI:15379"/>
        <dbReference type="ChEBI" id="CHEBI:35291"/>
        <dbReference type="ChEBI" id="CHEBI:57618"/>
        <dbReference type="ChEBI" id="CHEBI:58210"/>
        <dbReference type="ChEBI" id="CHEBI:139258"/>
    </reaction>
    <physiologicalReaction direction="left-to-right" evidence="2">
        <dbReference type="Rhea" id="RHEA:55857"/>
    </physiologicalReaction>
</comment>
<comment type="cofactor">
    <cofactor evidence="4">
        <name>heme</name>
        <dbReference type="ChEBI" id="CHEBI:30413"/>
    </cofactor>
</comment>
<comment type="subcellular location">
    <subcellularLocation>
        <location evidence="1">Endoplasmic reticulum membrane</location>
        <topology evidence="1">Peripheral membrane protein</topology>
    </subcellularLocation>
    <subcellularLocation>
        <location evidence="1">Microsome membrane</location>
        <topology evidence="1">Peripheral membrane protein</topology>
    </subcellularLocation>
</comment>
<comment type="similarity">
    <text evidence="6">Belongs to the cytochrome P450 family.</text>
</comment>
<proteinExistence type="evidence at transcript level"/>
<name>CP26B_XENTR</name>
<sequence length="511" mass="57760">MIFQSFDLVSALATLAACLVSVALLLAVSQQLWQLRWAATRDKSCKLPIPKGSMGFPLVGETFHWILQGSDFQSSRREKYGNVFKTHLLGRPLIRVTGAENVRKILMGEHHLVSTEWPRSTRMLLGPNSLANSIGDIHRHKRKVFSKIFSHEALESYLPKIQLVIQDTLRVWSSNPESINVYCEAQKLTFRMAIRVLLGFRLSDEELSQLFQVFQQFVENVFSLPVDVPFSGYRRGIRAREMLLKSLEKAIQEKLQNTQGKDYADALDILIESGKEHGKELTMQELKDGTLELIFAAYATTASASTSLIMQLLKHPSVLEKLREELRGNSILHNGCVCEGALRVETISSLHYLDCVIKEILRLFSPVSGGYRTVLQTFELDGFQIPKGWSVLYSIRDTHDTAPVFKDVDVFDPDRFGQDRTEDKDGRFHYLPFGGGVRNCLGKHLAKLFLKVLAIELASMSRFELATRTFPKIMPVPVVHPADELKVRFFGLDSNQNEIMTETEAMLGATV</sequence>
<organism>
    <name type="scientific">Xenopus tropicalis</name>
    <name type="common">Western clawed frog</name>
    <name type="synonym">Silurana tropicalis</name>
    <dbReference type="NCBI Taxonomy" id="8364"/>
    <lineage>
        <taxon>Eukaryota</taxon>
        <taxon>Metazoa</taxon>
        <taxon>Chordata</taxon>
        <taxon>Craniata</taxon>
        <taxon>Vertebrata</taxon>
        <taxon>Euteleostomi</taxon>
        <taxon>Amphibia</taxon>
        <taxon>Batrachia</taxon>
        <taxon>Anura</taxon>
        <taxon>Pipoidea</taxon>
        <taxon>Pipidae</taxon>
        <taxon>Xenopodinae</taxon>
        <taxon>Xenopus</taxon>
        <taxon>Silurana</taxon>
    </lineage>
</organism>
<protein>
    <recommendedName>
        <fullName>Cytochrome P450 26B1</fullName>
        <ecNumber evidence="3">1.14.13.-</ecNumber>
    </recommendedName>
</protein>
<feature type="chain" id="PRO_0000416907" description="Cytochrome P450 26B1">
    <location>
        <begin position="1"/>
        <end position="511"/>
    </location>
</feature>
<feature type="binding site" description="axial binding residue" evidence="5">
    <location>
        <position position="440"/>
    </location>
    <ligand>
        <name>heme</name>
        <dbReference type="ChEBI" id="CHEBI:30413"/>
    </ligand>
    <ligandPart>
        <name>Fe</name>
        <dbReference type="ChEBI" id="CHEBI:18248"/>
    </ligandPart>
</feature>
<keyword id="KW-0256">Endoplasmic reticulum</keyword>
<keyword id="KW-0349">Heme</keyword>
<keyword id="KW-0408">Iron</keyword>
<keyword id="KW-0443">Lipid metabolism</keyword>
<keyword id="KW-0472">Membrane</keyword>
<keyword id="KW-0479">Metal-binding</keyword>
<keyword id="KW-0492">Microsome</keyword>
<keyword id="KW-0503">Monooxygenase</keyword>
<keyword id="KW-0560">Oxidoreductase</keyword>
<keyword id="KW-1185">Reference proteome</keyword>
<gene>
    <name type="primary">cyp26b1</name>
</gene>
<dbReference type="EC" id="1.14.13.-" evidence="3"/>
<dbReference type="EMBL" id="AAMC01080557">
    <property type="status" value="NOT_ANNOTATED_CDS"/>
    <property type="molecule type" value="Genomic_DNA"/>
</dbReference>
<dbReference type="EMBL" id="AAMC01080558">
    <property type="status" value="NOT_ANNOTATED_CDS"/>
    <property type="molecule type" value="Genomic_DNA"/>
</dbReference>
<dbReference type="EMBL" id="AAMC01080559">
    <property type="status" value="NOT_ANNOTATED_CDS"/>
    <property type="molecule type" value="Genomic_DNA"/>
</dbReference>
<dbReference type="EMBL" id="AAMC01080560">
    <property type="status" value="NOT_ANNOTATED_CDS"/>
    <property type="molecule type" value="Genomic_DNA"/>
</dbReference>
<dbReference type="EMBL" id="BC123940">
    <property type="protein sequence ID" value="AAI23941.1"/>
    <property type="molecule type" value="mRNA"/>
</dbReference>
<dbReference type="EMBL" id="BC135551">
    <property type="protein sequence ID" value="AAI35552.1"/>
    <property type="molecule type" value="mRNA"/>
</dbReference>
<dbReference type="RefSeq" id="NP_001072655.1">
    <property type="nucleotide sequence ID" value="NM_001079187.2"/>
</dbReference>
<dbReference type="SMR" id="Q08D50"/>
<dbReference type="FunCoup" id="Q08D50">
    <property type="interactions" value="232"/>
</dbReference>
<dbReference type="STRING" id="8364.ENSXETP00000033615"/>
<dbReference type="PaxDb" id="8364-ENSXETP00000046568"/>
<dbReference type="DNASU" id="780112"/>
<dbReference type="GeneID" id="780112"/>
<dbReference type="KEGG" id="xtr:780112"/>
<dbReference type="AGR" id="Xenbase:XB-GENE-991500"/>
<dbReference type="CTD" id="56603"/>
<dbReference type="Xenbase" id="XB-GENE-991500">
    <property type="gene designation" value="cyp26b1"/>
</dbReference>
<dbReference type="eggNOG" id="KOG0157">
    <property type="taxonomic scope" value="Eukaryota"/>
</dbReference>
<dbReference type="InParanoid" id="Q08D50"/>
<dbReference type="OMA" id="WDGQFVN"/>
<dbReference type="OrthoDB" id="1372046at2759"/>
<dbReference type="Reactome" id="R-XTR-211916">
    <property type="pathway name" value="Vitamins"/>
</dbReference>
<dbReference type="Reactome" id="R-XTR-5365859">
    <property type="pathway name" value="RA biosynthesis pathway"/>
</dbReference>
<dbReference type="Proteomes" id="UP000008143">
    <property type="component" value="Chromosome 1"/>
</dbReference>
<dbReference type="GO" id="GO:0005789">
    <property type="term" value="C:endoplasmic reticulum membrane"/>
    <property type="evidence" value="ECO:0007669"/>
    <property type="project" value="UniProtKB-SubCell"/>
</dbReference>
<dbReference type="GO" id="GO:0062183">
    <property type="term" value="F:all-trans retinoic acid 18-hydroxylase activity"/>
    <property type="evidence" value="ECO:0007669"/>
    <property type="project" value="RHEA"/>
</dbReference>
<dbReference type="GO" id="GO:0020037">
    <property type="term" value="F:heme binding"/>
    <property type="evidence" value="ECO:0007669"/>
    <property type="project" value="InterPro"/>
</dbReference>
<dbReference type="GO" id="GO:0005506">
    <property type="term" value="F:iron ion binding"/>
    <property type="evidence" value="ECO:0007669"/>
    <property type="project" value="InterPro"/>
</dbReference>
<dbReference type="GO" id="GO:0008401">
    <property type="term" value="F:retinoic acid 4-hydroxylase activity"/>
    <property type="evidence" value="ECO:0000250"/>
    <property type="project" value="UniProtKB"/>
</dbReference>
<dbReference type="GO" id="GO:0034653">
    <property type="term" value="P:retinoic acid catabolic process"/>
    <property type="evidence" value="ECO:0000250"/>
    <property type="project" value="UniProtKB"/>
</dbReference>
<dbReference type="CDD" id="cd20637">
    <property type="entry name" value="CYP26B1"/>
    <property type="match status" value="1"/>
</dbReference>
<dbReference type="FunFam" id="1.10.630.10:FF:000009">
    <property type="entry name" value="Cytochrome P450 26B1 isoform 1"/>
    <property type="match status" value="1"/>
</dbReference>
<dbReference type="Gene3D" id="1.10.630.10">
    <property type="entry name" value="Cytochrome P450"/>
    <property type="match status" value="1"/>
</dbReference>
<dbReference type="InterPro" id="IPR001128">
    <property type="entry name" value="Cyt_P450"/>
</dbReference>
<dbReference type="InterPro" id="IPR017972">
    <property type="entry name" value="Cyt_P450_CS"/>
</dbReference>
<dbReference type="InterPro" id="IPR002403">
    <property type="entry name" value="Cyt_P450_E_grp-IV"/>
</dbReference>
<dbReference type="InterPro" id="IPR036396">
    <property type="entry name" value="Cyt_P450_sf"/>
</dbReference>
<dbReference type="PANTHER" id="PTHR24286">
    <property type="entry name" value="CYTOCHROME P450 26"/>
    <property type="match status" value="1"/>
</dbReference>
<dbReference type="PANTHER" id="PTHR24286:SF177">
    <property type="entry name" value="CYTOCHROME P450 26B1"/>
    <property type="match status" value="1"/>
</dbReference>
<dbReference type="Pfam" id="PF00067">
    <property type="entry name" value="p450"/>
    <property type="match status" value="1"/>
</dbReference>
<dbReference type="PRINTS" id="PR00465">
    <property type="entry name" value="EP450IV"/>
</dbReference>
<dbReference type="PRINTS" id="PR00385">
    <property type="entry name" value="P450"/>
</dbReference>
<dbReference type="SUPFAM" id="SSF48264">
    <property type="entry name" value="Cytochrome P450"/>
    <property type="match status" value="1"/>
</dbReference>
<dbReference type="PROSITE" id="PS00086">
    <property type="entry name" value="CYTOCHROME_P450"/>
    <property type="match status" value="1"/>
</dbReference>